<keyword id="KW-0325">Glycoprotein</keyword>
<keyword id="KW-0349">Heme</keyword>
<keyword id="KW-0408">Iron</keyword>
<keyword id="KW-0472">Membrane</keyword>
<keyword id="KW-0479">Metal-binding</keyword>
<keyword id="KW-0503">Monooxygenase</keyword>
<keyword id="KW-0560">Oxidoreductase</keyword>
<keyword id="KW-1185">Reference proteome</keyword>
<keyword id="KW-0812">Transmembrane</keyword>
<keyword id="KW-1133">Transmembrane helix</keyword>
<gene>
    <name evidence="8" type="primary">ausI</name>
    <name type="ORF">AN9253</name>
</gene>
<dbReference type="EC" id="1.-.-.-" evidence="9"/>
<dbReference type="EMBL" id="AACD01000172">
    <property type="protein sequence ID" value="EAA66320.1"/>
    <property type="molecule type" value="Genomic_DNA"/>
</dbReference>
<dbReference type="EMBL" id="BN001308">
    <property type="protein sequence ID" value="CBF87253.1"/>
    <property type="molecule type" value="Genomic_DNA"/>
</dbReference>
<dbReference type="RefSeq" id="XP_682522.1">
    <property type="nucleotide sequence ID" value="XM_677430.1"/>
</dbReference>
<dbReference type="SMR" id="Q5AR27"/>
<dbReference type="STRING" id="227321.Q5AR27"/>
<dbReference type="GlyCosmos" id="Q5AR27">
    <property type="glycosylation" value="1 site, No reported glycans"/>
</dbReference>
<dbReference type="EnsemblFungi" id="CBF87253">
    <property type="protein sequence ID" value="CBF87253"/>
    <property type="gene ID" value="ANIA_09253"/>
</dbReference>
<dbReference type="KEGG" id="ani:ANIA_09253"/>
<dbReference type="VEuPathDB" id="FungiDB:AN9253"/>
<dbReference type="eggNOG" id="KOG0157">
    <property type="taxonomic scope" value="Eukaryota"/>
</dbReference>
<dbReference type="HOGENOM" id="CLU_022195_0_3_1"/>
<dbReference type="InParanoid" id="Q5AR27"/>
<dbReference type="OMA" id="AINANMA"/>
<dbReference type="OrthoDB" id="1844152at2759"/>
<dbReference type="UniPathway" id="UPA00213"/>
<dbReference type="Proteomes" id="UP000000560">
    <property type="component" value="Chromosome VIII"/>
</dbReference>
<dbReference type="GO" id="GO:0016020">
    <property type="term" value="C:membrane"/>
    <property type="evidence" value="ECO:0007669"/>
    <property type="project" value="UniProtKB-SubCell"/>
</dbReference>
<dbReference type="GO" id="GO:0020037">
    <property type="term" value="F:heme binding"/>
    <property type="evidence" value="ECO:0007669"/>
    <property type="project" value="InterPro"/>
</dbReference>
<dbReference type="GO" id="GO:0005506">
    <property type="term" value="F:iron ion binding"/>
    <property type="evidence" value="ECO:0007669"/>
    <property type="project" value="InterPro"/>
</dbReference>
<dbReference type="GO" id="GO:0004497">
    <property type="term" value="F:monooxygenase activity"/>
    <property type="evidence" value="ECO:0007669"/>
    <property type="project" value="UniProtKB-KW"/>
</dbReference>
<dbReference type="GO" id="GO:0016705">
    <property type="term" value="F:oxidoreductase activity, acting on paired donors, with incorporation or reduction of molecular oxygen"/>
    <property type="evidence" value="ECO:0007669"/>
    <property type="project" value="InterPro"/>
</dbReference>
<dbReference type="GO" id="GO:1900560">
    <property type="term" value="P:austinol biosynthetic process"/>
    <property type="evidence" value="ECO:0000315"/>
    <property type="project" value="AspGD"/>
</dbReference>
<dbReference type="GO" id="GO:1900563">
    <property type="term" value="P:dehydroaustinol biosynthetic process"/>
    <property type="evidence" value="ECO:0000315"/>
    <property type="project" value="AspGD"/>
</dbReference>
<dbReference type="GO" id="GO:0016114">
    <property type="term" value="P:terpenoid biosynthetic process"/>
    <property type="evidence" value="ECO:0007669"/>
    <property type="project" value="UniProtKB-UniPathway"/>
</dbReference>
<dbReference type="CDD" id="cd11041">
    <property type="entry name" value="CYP503A1-like"/>
    <property type="match status" value="1"/>
</dbReference>
<dbReference type="FunFam" id="1.10.630.10:FF:000059">
    <property type="entry name" value="Cytochrome P450 monooxygenase"/>
    <property type="match status" value="1"/>
</dbReference>
<dbReference type="Gene3D" id="1.10.630.10">
    <property type="entry name" value="Cytochrome P450"/>
    <property type="match status" value="1"/>
</dbReference>
<dbReference type="InterPro" id="IPR001128">
    <property type="entry name" value="Cyt_P450"/>
</dbReference>
<dbReference type="InterPro" id="IPR017972">
    <property type="entry name" value="Cyt_P450_CS"/>
</dbReference>
<dbReference type="InterPro" id="IPR002403">
    <property type="entry name" value="Cyt_P450_E_grp-IV"/>
</dbReference>
<dbReference type="InterPro" id="IPR036396">
    <property type="entry name" value="Cyt_P450_sf"/>
</dbReference>
<dbReference type="PANTHER" id="PTHR46206">
    <property type="entry name" value="CYTOCHROME P450"/>
    <property type="match status" value="1"/>
</dbReference>
<dbReference type="PANTHER" id="PTHR46206:SF10">
    <property type="entry name" value="CYTOCHROME P450 MONOOXYGENASE AUSI"/>
    <property type="match status" value="1"/>
</dbReference>
<dbReference type="Pfam" id="PF00067">
    <property type="entry name" value="p450"/>
    <property type="match status" value="1"/>
</dbReference>
<dbReference type="PRINTS" id="PR00465">
    <property type="entry name" value="EP450IV"/>
</dbReference>
<dbReference type="SUPFAM" id="SSF48264">
    <property type="entry name" value="Cytochrome P450"/>
    <property type="match status" value="1"/>
</dbReference>
<dbReference type="PROSITE" id="PS00086">
    <property type="entry name" value="CYTOCHROME_P450"/>
    <property type="match status" value="1"/>
</dbReference>
<reference key="1">
    <citation type="journal article" date="2005" name="Nature">
        <title>Sequencing of Aspergillus nidulans and comparative analysis with A. fumigatus and A. oryzae.</title>
        <authorList>
            <person name="Galagan J.E."/>
            <person name="Calvo S.E."/>
            <person name="Cuomo C."/>
            <person name="Ma L.-J."/>
            <person name="Wortman J.R."/>
            <person name="Batzoglou S."/>
            <person name="Lee S.-I."/>
            <person name="Bastuerkmen M."/>
            <person name="Spevak C.C."/>
            <person name="Clutterbuck J."/>
            <person name="Kapitonov V."/>
            <person name="Jurka J."/>
            <person name="Scazzocchio C."/>
            <person name="Farman M.L."/>
            <person name="Butler J."/>
            <person name="Purcell S."/>
            <person name="Harris S."/>
            <person name="Braus G.H."/>
            <person name="Draht O."/>
            <person name="Busch S."/>
            <person name="D'Enfert C."/>
            <person name="Bouchier C."/>
            <person name="Goldman G.H."/>
            <person name="Bell-Pedersen D."/>
            <person name="Griffiths-Jones S."/>
            <person name="Doonan J.H."/>
            <person name="Yu J."/>
            <person name="Vienken K."/>
            <person name="Pain A."/>
            <person name="Freitag M."/>
            <person name="Selker E.U."/>
            <person name="Archer D.B."/>
            <person name="Penalva M.A."/>
            <person name="Oakley B.R."/>
            <person name="Momany M."/>
            <person name="Tanaka T."/>
            <person name="Kumagai T."/>
            <person name="Asai K."/>
            <person name="Machida M."/>
            <person name="Nierman W.C."/>
            <person name="Denning D.W."/>
            <person name="Caddick M.X."/>
            <person name="Hynes M."/>
            <person name="Paoletti M."/>
            <person name="Fischer R."/>
            <person name="Miller B.L."/>
            <person name="Dyer P.S."/>
            <person name="Sachs M.S."/>
            <person name="Osmani S.A."/>
            <person name="Birren B.W."/>
        </authorList>
    </citation>
    <scope>NUCLEOTIDE SEQUENCE [LARGE SCALE GENOMIC DNA]</scope>
    <source>
        <strain>FGSC A4 / ATCC 38163 / CBS 112.46 / NRRL 194 / M139</strain>
    </source>
</reference>
<reference key="2">
    <citation type="journal article" date="2009" name="Fungal Genet. Biol.">
        <title>The 2008 update of the Aspergillus nidulans genome annotation: a community effort.</title>
        <authorList>
            <person name="Wortman J.R."/>
            <person name="Gilsenan J.M."/>
            <person name="Joardar V."/>
            <person name="Deegan J."/>
            <person name="Clutterbuck J."/>
            <person name="Andersen M.R."/>
            <person name="Archer D."/>
            <person name="Bencina M."/>
            <person name="Braus G."/>
            <person name="Coutinho P."/>
            <person name="von Dohren H."/>
            <person name="Doonan J."/>
            <person name="Driessen A.J."/>
            <person name="Durek P."/>
            <person name="Espeso E."/>
            <person name="Fekete E."/>
            <person name="Flipphi M."/>
            <person name="Estrada C.G."/>
            <person name="Geysens S."/>
            <person name="Goldman G."/>
            <person name="de Groot P.W."/>
            <person name="Hansen K."/>
            <person name="Harris S.D."/>
            <person name="Heinekamp T."/>
            <person name="Helmstaedt K."/>
            <person name="Henrissat B."/>
            <person name="Hofmann G."/>
            <person name="Homan T."/>
            <person name="Horio T."/>
            <person name="Horiuchi H."/>
            <person name="James S."/>
            <person name="Jones M."/>
            <person name="Karaffa L."/>
            <person name="Karanyi Z."/>
            <person name="Kato M."/>
            <person name="Keller N."/>
            <person name="Kelly D.E."/>
            <person name="Kiel J.A."/>
            <person name="Kim J.M."/>
            <person name="van der Klei I.J."/>
            <person name="Klis F.M."/>
            <person name="Kovalchuk A."/>
            <person name="Krasevec N."/>
            <person name="Kubicek C.P."/>
            <person name="Liu B."/>
            <person name="Maccabe A."/>
            <person name="Meyer V."/>
            <person name="Mirabito P."/>
            <person name="Miskei M."/>
            <person name="Mos M."/>
            <person name="Mullins J."/>
            <person name="Nelson D.R."/>
            <person name="Nielsen J."/>
            <person name="Oakley B.R."/>
            <person name="Osmani S.A."/>
            <person name="Pakula T."/>
            <person name="Paszewski A."/>
            <person name="Paulsen I."/>
            <person name="Pilsyk S."/>
            <person name="Pocsi I."/>
            <person name="Punt P.J."/>
            <person name="Ram A.F."/>
            <person name="Ren Q."/>
            <person name="Robellet X."/>
            <person name="Robson G."/>
            <person name="Seiboth B."/>
            <person name="van Solingen P."/>
            <person name="Specht T."/>
            <person name="Sun J."/>
            <person name="Taheri-Talesh N."/>
            <person name="Takeshita N."/>
            <person name="Ussery D."/>
            <person name="vanKuyk P.A."/>
            <person name="Visser H."/>
            <person name="van de Vondervoort P.J."/>
            <person name="de Vries R.P."/>
            <person name="Walton J."/>
            <person name="Xiang X."/>
            <person name="Xiong Y."/>
            <person name="Zeng A.P."/>
            <person name="Brandt B.W."/>
            <person name="Cornell M.J."/>
            <person name="van den Hondel C.A."/>
            <person name="Visser J."/>
            <person name="Oliver S.G."/>
            <person name="Turner G."/>
        </authorList>
    </citation>
    <scope>GENOME REANNOTATION</scope>
    <source>
        <strain>FGSC A4 / ATCC 38163 / CBS 112.46 / NRRL 194 / M139</strain>
    </source>
</reference>
<reference key="3">
    <citation type="journal article" date="2012" name="ACS Chem. Biol.">
        <title>Signaling the induction of sporulation involves the interaction of two secondary metabolites in Aspergillus nidulans.</title>
        <authorList>
            <person name="Rodriguez-Urra A.B."/>
            <person name="Jimenez C."/>
            <person name="Nieto M.I."/>
            <person name="Rodriguez J."/>
            <person name="Hayashi H."/>
            <person name="Ugalde U."/>
        </authorList>
    </citation>
    <scope>FUNCTION</scope>
</reference>
<reference key="4">
    <citation type="journal article" date="2012" name="J. Am. Chem. Soc.">
        <title>Two separate gene clusters encode the biosynthetic pathway for the meroterpenoids austinol and dehydroaustinol in Aspergillus nidulans.</title>
        <authorList>
            <person name="Lo H.C."/>
            <person name="Entwistle R."/>
            <person name="Guo C.J."/>
            <person name="Ahuja M."/>
            <person name="Szewczyk E."/>
            <person name="Hung J.H."/>
            <person name="Chiang Y.M."/>
            <person name="Oakley B.R."/>
            <person name="Wang C.C."/>
        </authorList>
    </citation>
    <scope>FUNCTION</scope>
    <scope>DISRUPTION PHENOTYPE</scope>
</reference>
<reference key="5">
    <citation type="journal article" date="2013" name="J. Am. Chem. Soc.">
        <title>Spiro-ring formation is catalyzed by a multifunctional dioxygenase in austinol biosynthesis.</title>
        <authorList>
            <person name="Matsuda Y."/>
            <person name="Awakawa T."/>
            <person name="Wakimoto T."/>
            <person name="Abe I."/>
        </authorList>
    </citation>
    <scope>FUNCTION</scope>
</reference>
<reference key="6">
    <citation type="journal article" date="2017" name="ACS Chem. Biol.">
        <title>Rewiring of the austinoid biosynthetic pathway in filamentous fungi.</title>
        <authorList>
            <person name="Mattern D.J."/>
            <person name="Valiante V."/>
            <person name="Horn F."/>
            <person name="Petzke L."/>
            <person name="Brakhage A.A."/>
        </authorList>
    </citation>
    <scope>FUNCTION</scope>
</reference>
<name>AUSI_EMENI</name>
<evidence type="ECO:0000250" key="1">
    <source>
        <dbReference type="UniProtKB" id="P04798"/>
    </source>
</evidence>
<evidence type="ECO:0000255" key="2"/>
<evidence type="ECO:0000255" key="3">
    <source>
        <dbReference type="PROSITE-ProRule" id="PRU00498"/>
    </source>
</evidence>
<evidence type="ECO:0000269" key="4">
    <source>
    </source>
</evidence>
<evidence type="ECO:0000269" key="5">
    <source>
    </source>
</evidence>
<evidence type="ECO:0000269" key="6">
    <source>
    </source>
</evidence>
<evidence type="ECO:0000269" key="7">
    <source>
    </source>
</evidence>
<evidence type="ECO:0000303" key="8">
    <source>
    </source>
</evidence>
<evidence type="ECO:0000305" key="9"/>
<evidence type="ECO:0000305" key="10">
    <source>
    </source>
</evidence>
<accession>Q5AR27</accession>
<accession>C8VQ90</accession>
<feature type="chain" id="PRO_0000436490" description="Cytochrome P450 monooxygenase ausI">
    <location>
        <begin position="1"/>
        <end position="499"/>
    </location>
</feature>
<feature type="transmembrane region" description="Helical" evidence="2">
    <location>
        <begin position="10"/>
        <end position="30"/>
    </location>
</feature>
<feature type="binding site" description="axial binding residue" evidence="1">
    <location>
        <position position="439"/>
    </location>
    <ligand>
        <name>heme</name>
        <dbReference type="ChEBI" id="CHEBI:30413"/>
    </ligand>
    <ligandPart>
        <name>Fe</name>
        <dbReference type="ChEBI" id="CHEBI:18248"/>
    </ligandPart>
</feature>
<feature type="glycosylation site" description="N-linked (GlcNAc...) asparagine" evidence="3">
    <location>
        <position position="483"/>
    </location>
</feature>
<comment type="function">
    <text evidence="4 5 6 7">Cytochrome P450 monooxygenase; part of the gene cluster B that mediates the biosynthesis of austinol and dehydroaustinol, two fungal meroterpenoids (PubMed:22329759). The first step of the pathway is the synthesis of 3,5-dimethylorsellinic acid by the polyketide synthase ausA (PubMed:22329759). 3,5-dimethylorsellinic acid is then prenylated by the polyprenyl transferase ausN (PubMed:22329759). Further epoxidation by the FAD-dependent monooxygenase ausM and cyclization by the probable terpene cyclase ausL lead to the formation of protoaustinoid A (PubMed:22329759). Protoaustinoid A is then oxidized to spiro-lactone preaustinoid A3 by the combined action of the FAD-binding monooxygenases ausB and ausC, and the dioxygenase ausE (PubMed:22329759, PubMed:23865690). Acid-catalyzed keto-rearrangement and ring contraction of the tetraketide portion of preaustinoid A3 by ausJ lead to the formation of preaustinoid A4 (PubMed:22329759). The aldo-keto reductase ausK, with the help of ausH, is involved in the next step by transforming preaustinoid A4 into isoaustinone which is in turn hydroxylated by the P450 monooxygenase ausI to form austinolide (PubMed:22329759). Finally, the cytochrome P450 monooxygenase ausG modifies austinolide to austinol (PubMed:22329759). Austinol can be further modified to dehydroaustinol which forms a diffusible complex with diorcinol that initiates conidiation (PubMed:22234162, PubMed:22329759). Due to genetic rearrangements of the clusters and the subsequent loss of some enzymes, the end products of the Emericella nidulans austinoid biosynthesis clusters are austinol and dehydroaustinol, even if additional enzymes, such as the O-acetyltransferase ausQ and the cytochrome P450 monooxygenase ausR are still functional (PubMed:29076725).</text>
</comment>
<comment type="cofactor">
    <cofactor evidence="1">
        <name>heme</name>
        <dbReference type="ChEBI" id="CHEBI:30413"/>
    </cofactor>
</comment>
<comment type="pathway">
    <text evidence="5">Secondary metabolite biosynthesis; terpenoid biosynthesis.</text>
</comment>
<comment type="subcellular location">
    <subcellularLocation>
        <location evidence="2">Membrane</location>
        <topology evidence="2">Single-pass membrane protein</topology>
    </subcellularLocation>
</comment>
<comment type="disruption phenotype">
    <text evidence="5">Impairs the synthesis of austinol and dehydroaustinol and accumulates the intermediate compound isoaustinone (PubMed:22329759).</text>
</comment>
<comment type="miscellaneous">
    <text evidence="10">In A.calidoustus, the austinoid gene cluster lies on a contiguous DNA region, while clusters from E.nidulans and P.brasilianum are split in their respective genomes. Genetic rearrangements provoked variability among the clusters and E.nidulans produces the least number of austionoid derivatives with the end products austinol and dehydroaustinol, while P.brasilianum can produce until acetoxydehydroaustin, and A.calidoustus produces the highest number of identified derivatives.</text>
</comment>
<comment type="similarity">
    <text evidence="9">Belongs to the cytochrome P450 family.</text>
</comment>
<proteinExistence type="inferred from homology"/>
<sequence>MLQETISLTPLGQPLIAGFVVVSAVLYLLYNTQQWRPNNLPLLNDGGPFDFLQVTAVNRFRRDARRLIKSGFDSYKNVFAMRTDVGVELFASPEYADQFRNHPSLKVFPFTAKMHHGHLPGFELCRSQPVEDRILIESVRTQLAQSLGKLIQPLASDIGEAISDRWPSESGWQEIVLGSVVERTIAQGTSSVYCLDEAWPEFVVKMEMALGMASAALSAWPVMLRRIVAKFLPECLELYRIMKSGRELMSRDMRRRTALQASTGEEPLNFFEWFKEASHGEEYDELILNLRIAFASMHGLCDHLVKILLRLSEDPQLVSDLRKEVIQVYETHGWSKTALYHLKLMDSAFKEVQRVDPILFVGRVAVADVTLKDGLIIQKGQSIRISGHTMWDEDKYPDAAHFDPYRFYRLRQAPGQENTAQFTSPTSDHLGFGYGGRACPGRFFAAAVLKISLCHVLMKYDIKPANGETGQHVWEFAAAINANMTAKVLVRRRQPEIQI</sequence>
<organism>
    <name type="scientific">Emericella nidulans (strain FGSC A4 / ATCC 38163 / CBS 112.46 / NRRL 194 / M139)</name>
    <name type="common">Aspergillus nidulans</name>
    <dbReference type="NCBI Taxonomy" id="227321"/>
    <lineage>
        <taxon>Eukaryota</taxon>
        <taxon>Fungi</taxon>
        <taxon>Dikarya</taxon>
        <taxon>Ascomycota</taxon>
        <taxon>Pezizomycotina</taxon>
        <taxon>Eurotiomycetes</taxon>
        <taxon>Eurotiomycetidae</taxon>
        <taxon>Eurotiales</taxon>
        <taxon>Aspergillaceae</taxon>
        <taxon>Aspergillus</taxon>
        <taxon>Aspergillus subgen. Nidulantes</taxon>
    </lineage>
</organism>
<protein>
    <recommendedName>
        <fullName evidence="9">Cytochrome P450 monooxygenase ausI</fullName>
        <ecNumber evidence="9">1.-.-.-</ecNumber>
    </recommendedName>
    <alternativeName>
        <fullName evidence="8">Austinoid biosynthesis clusters protein I</fullName>
    </alternativeName>
</protein>